<name>RIBA_PSEPG</name>
<feature type="chain" id="PRO_1000077259" description="GTP cyclohydrolase-2">
    <location>
        <begin position="1"/>
        <end position="205"/>
    </location>
</feature>
<feature type="active site" description="Proton acceptor" evidence="1">
    <location>
        <position position="126"/>
    </location>
</feature>
<feature type="active site" description="Nucleophile" evidence="1">
    <location>
        <position position="128"/>
    </location>
</feature>
<feature type="binding site" evidence="1">
    <location>
        <begin position="49"/>
        <end position="53"/>
    </location>
    <ligand>
        <name>GTP</name>
        <dbReference type="ChEBI" id="CHEBI:37565"/>
    </ligand>
</feature>
<feature type="binding site" evidence="1">
    <location>
        <position position="54"/>
    </location>
    <ligand>
        <name>Zn(2+)</name>
        <dbReference type="ChEBI" id="CHEBI:29105"/>
        <note>catalytic</note>
    </ligand>
</feature>
<feature type="binding site" evidence="1">
    <location>
        <position position="65"/>
    </location>
    <ligand>
        <name>Zn(2+)</name>
        <dbReference type="ChEBI" id="CHEBI:29105"/>
        <note>catalytic</note>
    </ligand>
</feature>
<feature type="binding site" evidence="1">
    <location>
        <position position="67"/>
    </location>
    <ligand>
        <name>Zn(2+)</name>
        <dbReference type="ChEBI" id="CHEBI:29105"/>
        <note>catalytic</note>
    </ligand>
</feature>
<feature type="binding site" evidence="1">
    <location>
        <position position="70"/>
    </location>
    <ligand>
        <name>GTP</name>
        <dbReference type="ChEBI" id="CHEBI:37565"/>
    </ligand>
</feature>
<feature type="binding site" evidence="1">
    <location>
        <begin position="92"/>
        <end position="94"/>
    </location>
    <ligand>
        <name>GTP</name>
        <dbReference type="ChEBI" id="CHEBI:37565"/>
    </ligand>
</feature>
<feature type="binding site" evidence="1">
    <location>
        <position position="114"/>
    </location>
    <ligand>
        <name>GTP</name>
        <dbReference type="ChEBI" id="CHEBI:37565"/>
    </ligand>
</feature>
<feature type="binding site" evidence="1">
    <location>
        <position position="149"/>
    </location>
    <ligand>
        <name>GTP</name>
        <dbReference type="ChEBI" id="CHEBI:37565"/>
    </ligand>
</feature>
<feature type="binding site" evidence="1">
    <location>
        <position position="154"/>
    </location>
    <ligand>
        <name>GTP</name>
        <dbReference type="ChEBI" id="CHEBI:37565"/>
    </ligand>
</feature>
<reference key="1">
    <citation type="submission" date="2008-01" db="EMBL/GenBank/DDBJ databases">
        <title>Complete sequence of Pseudomonas putida GB-1.</title>
        <authorList>
            <consortium name="US DOE Joint Genome Institute"/>
            <person name="Copeland A."/>
            <person name="Lucas S."/>
            <person name="Lapidus A."/>
            <person name="Barry K."/>
            <person name="Glavina del Rio T."/>
            <person name="Dalin E."/>
            <person name="Tice H."/>
            <person name="Pitluck S."/>
            <person name="Bruce D."/>
            <person name="Goodwin L."/>
            <person name="Chertkov O."/>
            <person name="Brettin T."/>
            <person name="Detter J.C."/>
            <person name="Han C."/>
            <person name="Kuske C.R."/>
            <person name="Schmutz J."/>
            <person name="Larimer F."/>
            <person name="Land M."/>
            <person name="Hauser L."/>
            <person name="Kyrpides N."/>
            <person name="Kim E."/>
            <person name="McCarthy J.K."/>
            <person name="Richardson P."/>
        </authorList>
    </citation>
    <scope>NUCLEOTIDE SEQUENCE [LARGE SCALE GENOMIC DNA]</scope>
    <source>
        <strain>GB-1</strain>
    </source>
</reference>
<comment type="function">
    <text evidence="1">Catalyzes the conversion of GTP to 2,5-diamino-6-ribosylamino-4(3H)-pyrimidinone 5'-phosphate (DARP), formate and pyrophosphate.</text>
</comment>
<comment type="catalytic activity">
    <reaction evidence="1">
        <text>GTP + 4 H2O = 2,5-diamino-6-hydroxy-4-(5-phosphoribosylamino)-pyrimidine + formate + 2 phosphate + 3 H(+)</text>
        <dbReference type="Rhea" id="RHEA:23704"/>
        <dbReference type="ChEBI" id="CHEBI:15377"/>
        <dbReference type="ChEBI" id="CHEBI:15378"/>
        <dbReference type="ChEBI" id="CHEBI:15740"/>
        <dbReference type="ChEBI" id="CHEBI:37565"/>
        <dbReference type="ChEBI" id="CHEBI:43474"/>
        <dbReference type="ChEBI" id="CHEBI:58614"/>
        <dbReference type="EC" id="3.5.4.25"/>
    </reaction>
</comment>
<comment type="cofactor">
    <cofactor evidence="1">
        <name>Zn(2+)</name>
        <dbReference type="ChEBI" id="CHEBI:29105"/>
    </cofactor>
    <text evidence="1">Binds 1 zinc ion per subunit.</text>
</comment>
<comment type="pathway">
    <text evidence="1">Cofactor biosynthesis; riboflavin biosynthesis; 5-amino-6-(D-ribitylamino)uracil from GTP: step 1/4.</text>
</comment>
<comment type="similarity">
    <text evidence="1">Belongs to the GTP cyclohydrolase II family.</text>
</comment>
<proteinExistence type="inferred from homology"/>
<protein>
    <recommendedName>
        <fullName evidence="1">GTP cyclohydrolase-2</fullName>
        <ecNumber evidence="1">3.5.4.25</ecNumber>
    </recommendedName>
    <alternativeName>
        <fullName evidence="1">GTP cyclohydrolase II</fullName>
    </alternativeName>
</protein>
<accession>B0KL75</accession>
<evidence type="ECO:0000255" key="1">
    <source>
        <dbReference type="HAMAP-Rule" id="MF_00179"/>
    </source>
</evidence>
<sequence>MPVVFVAASKLPTPFATFTMHGFLDEATGREHVVLSLGDIADGQPVLGRLHSECLTGDALFSQRCDCGSQLEAALQAIAREGRGVLLYLRQEGRGIGLLNKIRAYELQDGGADTVEANERLGFAADQRDYAMCLPMLEHLGVKSLRLMTNNPRKVKALTDMNIVVAERVPLHTGHNPHNRYYLATKAGKLGHMLGNEHQGEAPQA</sequence>
<keyword id="KW-0342">GTP-binding</keyword>
<keyword id="KW-0378">Hydrolase</keyword>
<keyword id="KW-0479">Metal-binding</keyword>
<keyword id="KW-0547">Nucleotide-binding</keyword>
<keyword id="KW-0686">Riboflavin biosynthesis</keyword>
<keyword id="KW-0862">Zinc</keyword>
<gene>
    <name evidence="1" type="primary">ribA</name>
    <name type="ordered locus">PputGB1_0568</name>
</gene>
<dbReference type="EC" id="3.5.4.25" evidence="1"/>
<dbReference type="EMBL" id="CP000926">
    <property type="protein sequence ID" value="ABY96479.1"/>
    <property type="molecule type" value="Genomic_DNA"/>
</dbReference>
<dbReference type="RefSeq" id="WP_012270291.1">
    <property type="nucleotide sequence ID" value="NC_010322.1"/>
</dbReference>
<dbReference type="SMR" id="B0KL75"/>
<dbReference type="GeneID" id="49866682"/>
<dbReference type="KEGG" id="ppg:PputGB1_0568"/>
<dbReference type="eggNOG" id="COG0807">
    <property type="taxonomic scope" value="Bacteria"/>
</dbReference>
<dbReference type="HOGENOM" id="CLU_020273_2_1_6"/>
<dbReference type="UniPathway" id="UPA00275">
    <property type="reaction ID" value="UER00400"/>
</dbReference>
<dbReference type="Proteomes" id="UP000002157">
    <property type="component" value="Chromosome"/>
</dbReference>
<dbReference type="GO" id="GO:0005829">
    <property type="term" value="C:cytosol"/>
    <property type="evidence" value="ECO:0007669"/>
    <property type="project" value="TreeGrafter"/>
</dbReference>
<dbReference type="GO" id="GO:0005525">
    <property type="term" value="F:GTP binding"/>
    <property type="evidence" value="ECO:0007669"/>
    <property type="project" value="UniProtKB-KW"/>
</dbReference>
<dbReference type="GO" id="GO:0003935">
    <property type="term" value="F:GTP cyclohydrolase II activity"/>
    <property type="evidence" value="ECO:0007669"/>
    <property type="project" value="UniProtKB-UniRule"/>
</dbReference>
<dbReference type="GO" id="GO:0008270">
    <property type="term" value="F:zinc ion binding"/>
    <property type="evidence" value="ECO:0007669"/>
    <property type="project" value="UniProtKB-UniRule"/>
</dbReference>
<dbReference type="GO" id="GO:0009231">
    <property type="term" value="P:riboflavin biosynthetic process"/>
    <property type="evidence" value="ECO:0007669"/>
    <property type="project" value="UniProtKB-UniRule"/>
</dbReference>
<dbReference type="CDD" id="cd00641">
    <property type="entry name" value="GTP_cyclohydro2"/>
    <property type="match status" value="1"/>
</dbReference>
<dbReference type="FunFam" id="3.40.50.10990:FF:000002">
    <property type="entry name" value="GTP cyclohydrolase-2"/>
    <property type="match status" value="1"/>
</dbReference>
<dbReference type="Gene3D" id="3.40.50.10990">
    <property type="entry name" value="GTP cyclohydrolase II"/>
    <property type="match status" value="1"/>
</dbReference>
<dbReference type="HAMAP" id="MF_00179">
    <property type="entry name" value="RibA"/>
    <property type="match status" value="1"/>
</dbReference>
<dbReference type="InterPro" id="IPR032677">
    <property type="entry name" value="GTP_cyclohydro_II"/>
</dbReference>
<dbReference type="InterPro" id="IPR000926">
    <property type="entry name" value="RibA"/>
</dbReference>
<dbReference type="InterPro" id="IPR036144">
    <property type="entry name" value="RibA-like_sf"/>
</dbReference>
<dbReference type="NCBIfam" id="NF001591">
    <property type="entry name" value="PRK00393.1"/>
    <property type="match status" value="1"/>
</dbReference>
<dbReference type="NCBIfam" id="TIGR00505">
    <property type="entry name" value="ribA"/>
    <property type="match status" value="1"/>
</dbReference>
<dbReference type="PANTHER" id="PTHR21327:SF18">
    <property type="entry name" value="3,4-DIHYDROXY-2-BUTANONE 4-PHOSPHATE SYNTHASE"/>
    <property type="match status" value="1"/>
</dbReference>
<dbReference type="PANTHER" id="PTHR21327">
    <property type="entry name" value="GTP CYCLOHYDROLASE II-RELATED"/>
    <property type="match status" value="1"/>
</dbReference>
<dbReference type="Pfam" id="PF00925">
    <property type="entry name" value="GTP_cyclohydro2"/>
    <property type="match status" value="1"/>
</dbReference>
<dbReference type="SUPFAM" id="SSF142695">
    <property type="entry name" value="RibA-like"/>
    <property type="match status" value="1"/>
</dbReference>
<organism>
    <name type="scientific">Pseudomonas putida (strain GB-1)</name>
    <dbReference type="NCBI Taxonomy" id="76869"/>
    <lineage>
        <taxon>Bacteria</taxon>
        <taxon>Pseudomonadati</taxon>
        <taxon>Pseudomonadota</taxon>
        <taxon>Gammaproteobacteria</taxon>
        <taxon>Pseudomonadales</taxon>
        <taxon>Pseudomonadaceae</taxon>
        <taxon>Pseudomonas</taxon>
    </lineage>
</organism>